<reference key="1">
    <citation type="submission" date="2007-11" db="EMBL/GenBank/DDBJ databases">
        <title>Complete genome sequence of Clostridium phytofermentans ISDg.</title>
        <authorList>
            <person name="Leschine S.B."/>
            <person name="Warnick T.A."/>
            <person name="Blanchard J.L."/>
            <person name="Schnell D.J."/>
            <person name="Petit E.L."/>
            <person name="LaTouf W.G."/>
            <person name="Copeland A."/>
            <person name="Lucas S."/>
            <person name="Lapidus A."/>
            <person name="Barry K."/>
            <person name="Glavina del Rio T."/>
            <person name="Dalin E."/>
            <person name="Tice H."/>
            <person name="Pitluck S."/>
            <person name="Kiss H."/>
            <person name="Brettin T."/>
            <person name="Bruce D."/>
            <person name="Detter J.C."/>
            <person name="Han C."/>
            <person name="Kuske C."/>
            <person name="Schmutz J."/>
            <person name="Larimer F."/>
            <person name="Land M."/>
            <person name="Hauser L."/>
            <person name="Kyrpides N."/>
            <person name="Kim E.A."/>
            <person name="Richardson P."/>
        </authorList>
    </citation>
    <scope>NUCLEOTIDE SEQUENCE [LARGE SCALE GENOMIC DNA]</scope>
    <source>
        <strain>ATCC 700394 / DSM 18823 / ISDg</strain>
    </source>
</reference>
<name>Y1568_LACP7</name>
<protein>
    <recommendedName>
        <fullName evidence="1">UPF0246 protein Cphy_1568</fullName>
    </recommendedName>
</protein>
<gene>
    <name type="ordered locus">Cphy_1568</name>
</gene>
<feature type="chain" id="PRO_1000082764" description="UPF0246 protein Cphy_1568">
    <location>
        <begin position="1"/>
        <end position="255"/>
    </location>
</feature>
<accession>A9KQM9</accession>
<keyword id="KW-1185">Reference proteome</keyword>
<evidence type="ECO:0000255" key="1">
    <source>
        <dbReference type="HAMAP-Rule" id="MF_00652"/>
    </source>
</evidence>
<dbReference type="EMBL" id="CP000885">
    <property type="protein sequence ID" value="ABX41942.1"/>
    <property type="molecule type" value="Genomic_DNA"/>
</dbReference>
<dbReference type="RefSeq" id="WP_012199596.1">
    <property type="nucleotide sequence ID" value="NC_010001.1"/>
</dbReference>
<dbReference type="SMR" id="A9KQM9"/>
<dbReference type="STRING" id="357809.Cphy_1568"/>
<dbReference type="KEGG" id="cpy:Cphy_1568"/>
<dbReference type="eggNOG" id="COG3022">
    <property type="taxonomic scope" value="Bacteria"/>
</dbReference>
<dbReference type="HOGENOM" id="CLU_061989_1_0_9"/>
<dbReference type="OrthoDB" id="9777133at2"/>
<dbReference type="Proteomes" id="UP000000370">
    <property type="component" value="Chromosome"/>
</dbReference>
<dbReference type="GO" id="GO:0005829">
    <property type="term" value="C:cytosol"/>
    <property type="evidence" value="ECO:0007669"/>
    <property type="project" value="TreeGrafter"/>
</dbReference>
<dbReference type="GO" id="GO:0033194">
    <property type="term" value="P:response to hydroperoxide"/>
    <property type="evidence" value="ECO:0007669"/>
    <property type="project" value="TreeGrafter"/>
</dbReference>
<dbReference type="HAMAP" id="MF_00652">
    <property type="entry name" value="UPF0246"/>
    <property type="match status" value="1"/>
</dbReference>
<dbReference type="InterPro" id="IPR005583">
    <property type="entry name" value="YaaA"/>
</dbReference>
<dbReference type="NCBIfam" id="NF002543">
    <property type="entry name" value="PRK02101.1-4"/>
    <property type="match status" value="1"/>
</dbReference>
<dbReference type="PANTHER" id="PTHR30283:SF4">
    <property type="entry name" value="PEROXIDE STRESS RESISTANCE PROTEIN YAAA"/>
    <property type="match status" value="1"/>
</dbReference>
<dbReference type="PANTHER" id="PTHR30283">
    <property type="entry name" value="PEROXIDE STRESS RESPONSE PROTEIN YAAA"/>
    <property type="match status" value="1"/>
</dbReference>
<dbReference type="Pfam" id="PF03883">
    <property type="entry name" value="H2O2_YaaD"/>
    <property type="match status" value="1"/>
</dbReference>
<sequence>MRIIISPAKKMVENIEALPVCGEPSFIDQTNQLLTYLKSLSYEEAKEIWNCNDQLATMNFERIASMNLKTKLTPAILSYQGIQYQYMAPEVLEKDQLEYIQEHLYILSGFYGILKPLDGVTAYRLEMQAKVNLSDKKDLYEFWGSLLYNKLREETDFILNLASKEYSKCIERYVTEDVRLVTCVFGERKGEKVIEKGTYAKMARGEMVRYMAEHKISTMSEVKKFDRLDFSYDENLSNETKLVFLKGESNVRDRK</sequence>
<proteinExistence type="inferred from homology"/>
<organism>
    <name type="scientific">Lachnoclostridium phytofermentans (strain ATCC 700394 / DSM 18823 / ISDg)</name>
    <name type="common">Clostridium phytofermentans</name>
    <dbReference type="NCBI Taxonomy" id="357809"/>
    <lineage>
        <taxon>Bacteria</taxon>
        <taxon>Bacillati</taxon>
        <taxon>Bacillota</taxon>
        <taxon>Clostridia</taxon>
        <taxon>Lachnospirales</taxon>
        <taxon>Lachnospiraceae</taxon>
    </lineage>
</organism>
<comment type="similarity">
    <text evidence="1">Belongs to the UPF0246 family.</text>
</comment>